<dbReference type="EMBL" id="AE017199">
    <property type="protein sequence ID" value="AAR39167.1"/>
    <property type="molecule type" value="Genomic_DNA"/>
</dbReference>
<dbReference type="SMR" id="P62427"/>
<dbReference type="STRING" id="228908.NEQ319"/>
<dbReference type="EnsemblBacteria" id="AAR39167">
    <property type="protein sequence ID" value="AAR39167"/>
    <property type="gene ID" value="NEQ319"/>
</dbReference>
<dbReference type="KEGG" id="neq:NEQ319"/>
<dbReference type="PATRIC" id="fig|228908.8.peg.326"/>
<dbReference type="HOGENOM" id="CLU_084513_4_0_2"/>
<dbReference type="Proteomes" id="UP000000578">
    <property type="component" value="Chromosome"/>
</dbReference>
<dbReference type="GO" id="GO:0005737">
    <property type="term" value="C:cytoplasm"/>
    <property type="evidence" value="ECO:0007669"/>
    <property type="project" value="UniProtKB-SubCell"/>
</dbReference>
<dbReference type="GO" id="GO:1990904">
    <property type="term" value="C:ribonucleoprotein complex"/>
    <property type="evidence" value="ECO:0007669"/>
    <property type="project" value="UniProtKB-KW"/>
</dbReference>
<dbReference type="GO" id="GO:0005840">
    <property type="term" value="C:ribosome"/>
    <property type="evidence" value="ECO:0007669"/>
    <property type="project" value="UniProtKB-KW"/>
</dbReference>
<dbReference type="GO" id="GO:0004526">
    <property type="term" value="F:ribonuclease P activity"/>
    <property type="evidence" value="ECO:0007669"/>
    <property type="project" value="UniProtKB-UniRule"/>
</dbReference>
<dbReference type="GO" id="GO:0019843">
    <property type="term" value="F:rRNA binding"/>
    <property type="evidence" value="ECO:0007669"/>
    <property type="project" value="UniProtKB-KW"/>
</dbReference>
<dbReference type="GO" id="GO:0003735">
    <property type="term" value="F:structural constituent of ribosome"/>
    <property type="evidence" value="ECO:0007669"/>
    <property type="project" value="InterPro"/>
</dbReference>
<dbReference type="GO" id="GO:0042254">
    <property type="term" value="P:ribosome biogenesis"/>
    <property type="evidence" value="ECO:0007669"/>
    <property type="project" value="InterPro"/>
</dbReference>
<dbReference type="GO" id="GO:0006412">
    <property type="term" value="P:translation"/>
    <property type="evidence" value="ECO:0007669"/>
    <property type="project" value="UniProtKB-UniRule"/>
</dbReference>
<dbReference type="GO" id="GO:0001682">
    <property type="term" value="P:tRNA 5'-leader removal"/>
    <property type="evidence" value="ECO:0007669"/>
    <property type="project" value="UniProtKB-UniRule"/>
</dbReference>
<dbReference type="FunFam" id="3.30.1330.30:FF:000020">
    <property type="entry name" value="50S ribosomal protein L7Ae"/>
    <property type="match status" value="1"/>
</dbReference>
<dbReference type="Gene3D" id="3.30.1330.30">
    <property type="match status" value="1"/>
</dbReference>
<dbReference type="HAMAP" id="MF_00326">
    <property type="entry name" value="Ribosomal_eL8"/>
    <property type="match status" value="1"/>
</dbReference>
<dbReference type="InterPro" id="IPR050257">
    <property type="entry name" value="eL8/uL1-like"/>
</dbReference>
<dbReference type="InterPro" id="IPR029064">
    <property type="entry name" value="Ribosomal_eL30-like_sf"/>
</dbReference>
<dbReference type="InterPro" id="IPR004037">
    <property type="entry name" value="Ribosomal_eL8-like_CS"/>
</dbReference>
<dbReference type="InterPro" id="IPR004038">
    <property type="entry name" value="Ribosomal_eL8/eL30/eS12/Gad45"/>
</dbReference>
<dbReference type="InterPro" id="IPR018492">
    <property type="entry name" value="Ribosomal_eL8/Nhp2"/>
</dbReference>
<dbReference type="InterPro" id="IPR022481">
    <property type="entry name" value="Ribosomal_eL8_arc"/>
</dbReference>
<dbReference type="NCBIfam" id="TIGR03677">
    <property type="entry name" value="eL8_ribo"/>
    <property type="match status" value="1"/>
</dbReference>
<dbReference type="PANTHER" id="PTHR23105">
    <property type="entry name" value="RIBOSOMAL PROTEIN L7AE FAMILY MEMBER"/>
    <property type="match status" value="1"/>
</dbReference>
<dbReference type="Pfam" id="PF01248">
    <property type="entry name" value="Ribosomal_L7Ae"/>
    <property type="match status" value="1"/>
</dbReference>
<dbReference type="PRINTS" id="PR00881">
    <property type="entry name" value="L7ARS6FAMILY"/>
</dbReference>
<dbReference type="PRINTS" id="PR00884">
    <property type="entry name" value="RIBOSOMALHS6"/>
</dbReference>
<dbReference type="SUPFAM" id="SSF55315">
    <property type="entry name" value="L30e-like"/>
    <property type="match status" value="1"/>
</dbReference>
<dbReference type="PROSITE" id="PS01082">
    <property type="entry name" value="RIBOSOMAL_L7AE"/>
    <property type="match status" value="1"/>
</dbReference>
<organism>
    <name type="scientific">Nanoarchaeum equitans (strain Kin4-M)</name>
    <dbReference type="NCBI Taxonomy" id="228908"/>
    <lineage>
        <taxon>Archaea</taxon>
        <taxon>Nanobdellota</taxon>
        <taxon>Candidatus Nanoarchaeia</taxon>
        <taxon>Nanoarchaeales</taxon>
        <taxon>Nanoarchaeaceae</taxon>
        <taxon>Nanoarchaeum</taxon>
    </lineage>
</organism>
<proteinExistence type="inferred from homology"/>
<evidence type="ECO:0000255" key="1">
    <source>
        <dbReference type="HAMAP-Rule" id="MF_00326"/>
    </source>
</evidence>
<evidence type="ECO:0000305" key="2"/>
<keyword id="KW-0963">Cytoplasm</keyword>
<keyword id="KW-1185">Reference proteome</keyword>
<keyword id="KW-0687">Ribonucleoprotein</keyword>
<keyword id="KW-0689">Ribosomal protein</keyword>
<keyword id="KW-0694">RNA-binding</keyword>
<keyword id="KW-0699">rRNA-binding</keyword>
<keyword id="KW-0819">tRNA processing</keyword>
<accession>P62427</accession>
<name>RL7A_NANEQ</name>
<reference key="1">
    <citation type="journal article" date="2003" name="Proc. Natl. Acad. Sci. U.S.A.">
        <title>The genome of Nanoarchaeum equitans: insights into early archaeal evolution and derived parasitism.</title>
        <authorList>
            <person name="Waters E."/>
            <person name="Hohn M.J."/>
            <person name="Ahel I."/>
            <person name="Graham D.E."/>
            <person name="Adams M.D."/>
            <person name="Barnstead M."/>
            <person name="Beeson K.Y."/>
            <person name="Bibbs L."/>
            <person name="Bolanos R."/>
            <person name="Keller M."/>
            <person name="Kretz K."/>
            <person name="Lin X."/>
            <person name="Mathur E."/>
            <person name="Ni J."/>
            <person name="Podar M."/>
            <person name="Richardson T."/>
            <person name="Sutton G.G."/>
            <person name="Simon M."/>
            <person name="Soell D."/>
            <person name="Stetter K.O."/>
            <person name="Short J.M."/>
            <person name="Noorderwier M."/>
        </authorList>
    </citation>
    <scope>NUCLEOTIDE SEQUENCE [LARGE SCALE GENOMIC DNA]</scope>
    <source>
        <strain>Kin4-M</strain>
    </source>
</reference>
<comment type="function">
    <text evidence="1">Multifunctional RNA-binding protein that recognizes the K-turn motif in ribosomal RNA, the RNA component of RNase P, box H/ACA, box C/D and box C'/D' sRNAs.</text>
</comment>
<comment type="subunit">
    <text evidence="1">Part of the 50S ribosomal subunit. Probably part of the RNase P complex.</text>
</comment>
<comment type="subcellular location">
    <subcellularLocation>
        <location evidence="1">Cytoplasm</location>
    </subcellularLocation>
</comment>
<comment type="similarity">
    <text evidence="1">Belongs to the eukaryotic ribosomal protein eL8 family.</text>
</comment>
<protein>
    <recommendedName>
        <fullName evidence="1">Large ribosomal subunit protein eL8</fullName>
    </recommendedName>
    <alternativeName>
        <fullName evidence="2">50S ribosomal protein L7Ae</fullName>
    </alternativeName>
    <alternativeName>
        <fullName evidence="1">Ribosomal protein L8e</fullName>
    </alternativeName>
</protein>
<feature type="chain" id="PRO_0000136798" description="Large ribosomal subunit protein eL8">
    <location>
        <begin position="1"/>
        <end position="125"/>
    </location>
</feature>
<sequence>MAEKPPYVKFEVPEELANKVYELVRKARETGKIRKGTNETTKAVERGQAKLVIIAENVNPPEIVMHLPALCEEKGVPYVYVPSKEELGKAAGINVSAASAAIIDAGEAKDLLEEIIRSVQELKAK</sequence>
<gene>
    <name evidence="1" type="primary">rpl7ae</name>
    <name type="ordered locus">NEQ319</name>
</gene>